<sequence>DRDATILKDDRTDNGDGNFHYSFETSNGIQDTKTGVPGSAGQSNMNGDFSFPLDDGSTASFTYVADENGYHVESPLLPSIPEYVQKQIDFAAEQRARGVIFD</sequence>
<accession>P81575</accession>
<organism>
    <name type="scientific">Cancer pagurus</name>
    <name type="common">Rock crab</name>
    <dbReference type="NCBI Taxonomy" id="6755"/>
    <lineage>
        <taxon>Eukaryota</taxon>
        <taxon>Metazoa</taxon>
        <taxon>Ecdysozoa</taxon>
        <taxon>Arthropoda</taxon>
        <taxon>Crustacea</taxon>
        <taxon>Multicrustacea</taxon>
        <taxon>Malacostraca</taxon>
        <taxon>Eumalacostraca</taxon>
        <taxon>Eucarida</taxon>
        <taxon>Decapoda</taxon>
        <taxon>Pleocyemata</taxon>
        <taxon>Brachyura</taxon>
        <taxon>Eubrachyura</taxon>
        <taxon>Cancroidea</taxon>
        <taxon>Cancridae</taxon>
        <taxon>Cancer</taxon>
    </lineage>
</organism>
<comment type="tissue specificity">
    <text>Arthrodial membrane and calcified shell.</text>
</comment>
<comment type="mass spectrometry"/>
<feature type="chain" id="PRO_0000196156" description="Cuticle protein AM/CP1114">
    <location>
        <begin position="1"/>
        <end position="102"/>
    </location>
</feature>
<feature type="domain" description="Chitin-binding type R&amp;R" evidence="1">
    <location>
        <begin position="16"/>
        <end position="81"/>
    </location>
</feature>
<feature type="region of interest" description="Disordered" evidence="2">
    <location>
        <begin position="23"/>
        <end position="50"/>
    </location>
</feature>
<feature type="compositionally biased region" description="Polar residues" evidence="2">
    <location>
        <begin position="23"/>
        <end position="33"/>
    </location>
</feature>
<reference key="1">
    <citation type="journal article" date="1999" name="Comp. Biochem. Physiol.">
        <title>Exoskeletal proteins from the crab, Cancer pagurus.</title>
        <authorList>
            <person name="Andersen S.O."/>
        </authorList>
    </citation>
    <scope>PROTEIN SEQUENCE</scope>
    <scope>MASS SPECTROMETRY</scope>
    <source>
        <tissue>Carapace cuticle</tissue>
    </source>
</reference>
<protein>
    <recommendedName>
        <fullName>Cuticle protein AM/CP1114</fullName>
    </recommendedName>
    <alternativeName>
        <fullName>CPAM/CPAM1114</fullName>
    </alternativeName>
</protein>
<dbReference type="GO" id="GO:0042302">
    <property type="term" value="F:structural constituent of cuticle"/>
    <property type="evidence" value="ECO:0007669"/>
    <property type="project" value="UniProtKB-KW"/>
</dbReference>
<dbReference type="InterPro" id="IPR031311">
    <property type="entry name" value="CHIT_BIND_RR_consensus"/>
</dbReference>
<dbReference type="InterPro" id="IPR000618">
    <property type="entry name" value="Insect_cuticle"/>
</dbReference>
<dbReference type="Pfam" id="PF00379">
    <property type="entry name" value="Chitin_bind_4"/>
    <property type="match status" value="1"/>
</dbReference>
<dbReference type="PRINTS" id="PR00947">
    <property type="entry name" value="CUTICLE"/>
</dbReference>
<dbReference type="PROSITE" id="PS00233">
    <property type="entry name" value="CHIT_BIND_RR_1"/>
    <property type="match status" value="1"/>
</dbReference>
<dbReference type="PROSITE" id="PS51155">
    <property type="entry name" value="CHIT_BIND_RR_2"/>
    <property type="match status" value="1"/>
</dbReference>
<name>CUPA1_CANPG</name>
<proteinExistence type="evidence at protein level"/>
<evidence type="ECO:0000255" key="1">
    <source>
        <dbReference type="PROSITE-ProRule" id="PRU00497"/>
    </source>
</evidence>
<evidence type="ECO:0000256" key="2">
    <source>
        <dbReference type="SAM" id="MobiDB-lite"/>
    </source>
</evidence>
<evidence type="ECO:0000269" key="3">
    <source>
    </source>
</evidence>
<keyword id="KW-0193">Cuticle</keyword>
<keyword id="KW-0903">Direct protein sequencing</keyword>